<accession>Q87UC3</accession>
<feature type="chain" id="PRO_0000245957" description="FMN-dependent NADH:quinone oxidoreductase 2">
    <location>
        <begin position="1"/>
        <end position="209"/>
    </location>
</feature>
<feature type="binding site" evidence="1">
    <location>
        <position position="9"/>
    </location>
    <ligand>
        <name>FMN</name>
        <dbReference type="ChEBI" id="CHEBI:58210"/>
    </ligand>
</feature>
<feature type="binding site" evidence="1">
    <location>
        <begin position="15"/>
        <end position="17"/>
    </location>
    <ligand>
        <name>FMN</name>
        <dbReference type="ChEBI" id="CHEBI:58210"/>
    </ligand>
</feature>
<feature type="binding site" evidence="1">
    <location>
        <begin position="97"/>
        <end position="100"/>
    </location>
    <ligand>
        <name>FMN</name>
        <dbReference type="ChEBI" id="CHEBI:58210"/>
    </ligand>
</feature>
<proteinExistence type="inferred from homology"/>
<dbReference type="EC" id="1.6.5.-" evidence="1"/>
<dbReference type="EC" id="1.7.1.17" evidence="1"/>
<dbReference type="EMBL" id="AE016853">
    <property type="protein sequence ID" value="AAO58804.1"/>
    <property type="molecule type" value="Genomic_DNA"/>
</dbReference>
<dbReference type="RefSeq" id="NP_795109.1">
    <property type="nucleotide sequence ID" value="NC_004578.1"/>
</dbReference>
<dbReference type="RefSeq" id="WP_011105458.1">
    <property type="nucleotide sequence ID" value="NC_004578.1"/>
</dbReference>
<dbReference type="SMR" id="Q87UC3"/>
<dbReference type="GeneID" id="1187069"/>
<dbReference type="KEGG" id="pst:PSPTO_5382"/>
<dbReference type="PATRIC" id="fig|223283.9.peg.5508"/>
<dbReference type="eggNOG" id="COG1182">
    <property type="taxonomic scope" value="Bacteria"/>
</dbReference>
<dbReference type="HOGENOM" id="CLU_088964_1_0_6"/>
<dbReference type="OrthoDB" id="9787136at2"/>
<dbReference type="PhylomeDB" id="Q87UC3"/>
<dbReference type="Proteomes" id="UP000002515">
    <property type="component" value="Chromosome"/>
</dbReference>
<dbReference type="GO" id="GO:0009055">
    <property type="term" value="F:electron transfer activity"/>
    <property type="evidence" value="ECO:0007669"/>
    <property type="project" value="UniProtKB-UniRule"/>
</dbReference>
<dbReference type="GO" id="GO:0010181">
    <property type="term" value="F:FMN binding"/>
    <property type="evidence" value="ECO:0007669"/>
    <property type="project" value="UniProtKB-UniRule"/>
</dbReference>
<dbReference type="GO" id="GO:0016652">
    <property type="term" value="F:oxidoreductase activity, acting on NAD(P)H as acceptor"/>
    <property type="evidence" value="ECO:0007669"/>
    <property type="project" value="UniProtKB-UniRule"/>
</dbReference>
<dbReference type="GO" id="GO:0016655">
    <property type="term" value="F:oxidoreductase activity, acting on NAD(P)H, quinone or similar compound as acceptor"/>
    <property type="evidence" value="ECO:0007669"/>
    <property type="project" value="InterPro"/>
</dbReference>
<dbReference type="Gene3D" id="3.40.50.360">
    <property type="match status" value="1"/>
</dbReference>
<dbReference type="HAMAP" id="MF_01216">
    <property type="entry name" value="Azoreductase_type1"/>
    <property type="match status" value="1"/>
</dbReference>
<dbReference type="InterPro" id="IPR003680">
    <property type="entry name" value="Flavodoxin_fold"/>
</dbReference>
<dbReference type="InterPro" id="IPR029039">
    <property type="entry name" value="Flavoprotein-like_sf"/>
</dbReference>
<dbReference type="InterPro" id="IPR050104">
    <property type="entry name" value="FMN-dep_NADH:Q_OxRdtase_AzoR1"/>
</dbReference>
<dbReference type="InterPro" id="IPR023048">
    <property type="entry name" value="NADH:quinone_OxRdtase_FMN_depd"/>
</dbReference>
<dbReference type="PANTHER" id="PTHR43741">
    <property type="entry name" value="FMN-DEPENDENT NADH-AZOREDUCTASE 1"/>
    <property type="match status" value="1"/>
</dbReference>
<dbReference type="PANTHER" id="PTHR43741:SF4">
    <property type="entry name" value="FMN-DEPENDENT NADH:QUINONE OXIDOREDUCTASE"/>
    <property type="match status" value="1"/>
</dbReference>
<dbReference type="Pfam" id="PF02525">
    <property type="entry name" value="Flavodoxin_2"/>
    <property type="match status" value="1"/>
</dbReference>
<dbReference type="SUPFAM" id="SSF52218">
    <property type="entry name" value="Flavoproteins"/>
    <property type="match status" value="1"/>
</dbReference>
<comment type="function">
    <text evidence="1">Quinone reductase that provides resistance to thiol-specific stress caused by electrophilic quinones.</text>
</comment>
<comment type="function">
    <text evidence="1">Also exhibits azoreductase activity. Catalyzes the reductive cleavage of the azo bond in aromatic azo compounds to the corresponding amines.</text>
</comment>
<comment type="catalytic activity">
    <reaction evidence="1">
        <text>2 a quinone + NADH + H(+) = 2 a 1,4-benzosemiquinone + NAD(+)</text>
        <dbReference type="Rhea" id="RHEA:65952"/>
        <dbReference type="ChEBI" id="CHEBI:15378"/>
        <dbReference type="ChEBI" id="CHEBI:57540"/>
        <dbReference type="ChEBI" id="CHEBI:57945"/>
        <dbReference type="ChEBI" id="CHEBI:132124"/>
        <dbReference type="ChEBI" id="CHEBI:134225"/>
    </reaction>
</comment>
<comment type="catalytic activity">
    <reaction evidence="1">
        <text>N,N-dimethyl-1,4-phenylenediamine + anthranilate + 2 NAD(+) = 2-(4-dimethylaminophenyl)diazenylbenzoate + 2 NADH + 2 H(+)</text>
        <dbReference type="Rhea" id="RHEA:55872"/>
        <dbReference type="ChEBI" id="CHEBI:15378"/>
        <dbReference type="ChEBI" id="CHEBI:15783"/>
        <dbReference type="ChEBI" id="CHEBI:16567"/>
        <dbReference type="ChEBI" id="CHEBI:57540"/>
        <dbReference type="ChEBI" id="CHEBI:57945"/>
        <dbReference type="ChEBI" id="CHEBI:71579"/>
        <dbReference type="EC" id="1.7.1.17"/>
    </reaction>
</comment>
<comment type="cofactor">
    <cofactor evidence="1">
        <name>FMN</name>
        <dbReference type="ChEBI" id="CHEBI:58210"/>
    </cofactor>
    <text evidence="1">Binds 1 FMN per subunit.</text>
</comment>
<comment type="subunit">
    <text evidence="1">Homodimer.</text>
</comment>
<comment type="similarity">
    <text evidence="1">Belongs to the azoreductase type 1 family.</text>
</comment>
<gene>
    <name evidence="1" type="primary">azoR2</name>
    <name type="ordered locus">PSPTO_5382</name>
</gene>
<reference key="1">
    <citation type="journal article" date="2003" name="Proc. Natl. Acad. Sci. U.S.A.">
        <title>The complete genome sequence of the Arabidopsis and tomato pathogen Pseudomonas syringae pv. tomato DC3000.</title>
        <authorList>
            <person name="Buell C.R."/>
            <person name="Joardar V."/>
            <person name="Lindeberg M."/>
            <person name="Selengut J."/>
            <person name="Paulsen I.T."/>
            <person name="Gwinn M.L."/>
            <person name="Dodson R.J."/>
            <person name="DeBoy R.T."/>
            <person name="Durkin A.S."/>
            <person name="Kolonay J.F."/>
            <person name="Madupu R."/>
            <person name="Daugherty S.C."/>
            <person name="Brinkac L.M."/>
            <person name="Beanan M.J."/>
            <person name="Haft D.H."/>
            <person name="Nelson W.C."/>
            <person name="Davidsen T.M."/>
            <person name="Zafar N."/>
            <person name="Zhou L."/>
            <person name="Liu J."/>
            <person name="Yuan Q."/>
            <person name="Khouri H.M."/>
            <person name="Fedorova N.B."/>
            <person name="Tran B."/>
            <person name="Russell D."/>
            <person name="Berry K.J."/>
            <person name="Utterback T.R."/>
            <person name="Van Aken S.E."/>
            <person name="Feldblyum T.V."/>
            <person name="D'Ascenzo M."/>
            <person name="Deng W.-L."/>
            <person name="Ramos A.R."/>
            <person name="Alfano J.R."/>
            <person name="Cartinhour S."/>
            <person name="Chatterjee A.K."/>
            <person name="Delaney T.P."/>
            <person name="Lazarowitz S.G."/>
            <person name="Martin G.B."/>
            <person name="Schneider D.J."/>
            <person name="Tang X."/>
            <person name="Bender C.L."/>
            <person name="White O."/>
            <person name="Fraser C.M."/>
            <person name="Collmer A."/>
        </authorList>
    </citation>
    <scope>NUCLEOTIDE SEQUENCE [LARGE SCALE GENOMIC DNA]</scope>
    <source>
        <strain>ATCC BAA-871 / DC3000</strain>
    </source>
</reference>
<organism>
    <name type="scientific">Pseudomonas syringae pv. tomato (strain ATCC BAA-871 / DC3000)</name>
    <dbReference type="NCBI Taxonomy" id="223283"/>
    <lineage>
        <taxon>Bacteria</taxon>
        <taxon>Pseudomonadati</taxon>
        <taxon>Pseudomonadota</taxon>
        <taxon>Gammaproteobacteria</taxon>
        <taxon>Pseudomonadales</taxon>
        <taxon>Pseudomonadaceae</taxon>
        <taxon>Pseudomonas</taxon>
    </lineage>
</organism>
<keyword id="KW-0285">Flavoprotein</keyword>
<keyword id="KW-0288">FMN</keyword>
<keyword id="KW-0520">NAD</keyword>
<keyword id="KW-0560">Oxidoreductase</keyword>
<keyword id="KW-1185">Reference proteome</keyword>
<evidence type="ECO:0000255" key="1">
    <source>
        <dbReference type="HAMAP-Rule" id="MF_01216"/>
    </source>
</evidence>
<protein>
    <recommendedName>
        <fullName evidence="1">FMN-dependent NADH:quinone oxidoreductase 2</fullName>
        <ecNumber evidence="1">1.6.5.-</ecNumber>
    </recommendedName>
    <alternativeName>
        <fullName evidence="1">Azo-dye reductase 2</fullName>
    </alternativeName>
    <alternativeName>
        <fullName evidence="1">FMN-dependent NADH-azo compound oxidoreductase 2</fullName>
    </alternativeName>
    <alternativeName>
        <fullName evidence="1">FMN-dependent NADH-azoreductase 2</fullName>
        <ecNumber evidence="1">1.7.1.17</ecNumber>
    </alternativeName>
</protein>
<name>AZOR2_PSESM</name>
<sequence>MHILHIASSPRGERSVSLKLASRYLETLTSLHPESTVDVLDVWTIDLLPFDGPALEAKYADLQGVQMSDEQQAVWKQIHALGERFHRADVILFSVPMWNFGVPYRLKHLIDSVSQRGVLFEFDAQGMRGLLKGKNVVVFASRGVALGEDFPTEAYDHQVAYLKTWARMVGIPTIDAVLSEATLADPATAEANFTAALAEASKLAAAVQP</sequence>